<organism>
    <name type="scientific">Leishmania major</name>
    <dbReference type="NCBI Taxonomy" id="5664"/>
    <lineage>
        <taxon>Eukaryota</taxon>
        <taxon>Discoba</taxon>
        <taxon>Euglenozoa</taxon>
        <taxon>Kinetoplastea</taxon>
        <taxon>Metakinetoplastina</taxon>
        <taxon>Trypanosomatida</taxon>
        <taxon>Trypanosomatidae</taxon>
        <taxon>Leishmaniinae</taxon>
        <taxon>Leishmania</taxon>
    </lineage>
</organism>
<evidence type="ECO:0000250" key="1"/>
<evidence type="ECO:0000255" key="2"/>
<evidence type="ECO:0000269" key="3">
    <source>
    </source>
</evidence>
<evidence type="ECO:0000269" key="4">
    <source>
    </source>
</evidence>
<evidence type="ECO:0000303" key="5">
    <source>
    </source>
</evidence>
<evidence type="ECO:0000303" key="6">
    <source>
    </source>
</evidence>
<evidence type="ECO:0000305" key="7"/>
<evidence type="ECO:0000312" key="8">
    <source>
        <dbReference type="EMBL" id="CBZ13127.1"/>
    </source>
</evidence>
<protein>
    <recommendedName>
        <fullName evidence="6">Phosphatidylinositol:ceramide inositolphosphotransferase</fullName>
        <shortName evidence="5 6">LmjIPCS</shortName>
        <ecNumber evidence="4">2.7.8.-</ecNumber>
    </recommendedName>
    <alternativeName>
        <fullName evidence="6">Inositol-phosphorylceramide synthase</fullName>
        <shortName evidence="6">IPC synthase</shortName>
    </alternativeName>
    <alternativeName>
        <fullName evidence="6">Sphingolipid synthase</fullName>
    </alternativeName>
</protein>
<sequence length="338" mass="37644">MTSHVTAHDVGGNEDIGTDHVPWYKQPLPLCTQVMRFILLLLLTVMFLGVAILVANARMPDPEKVRPLPDLLLESIPKVALLENGTNVIIFLLNATTVVVGFKVFLLERHMNGLPRVTFLVGVPKIGSFLNRMAFGVLDSGRRPFPLKNVFPIMAIRFLTSYAVVMVFRAFVIMGTSYPATDNHCQNPQVIEHPVLNVILTLVTLGSGAIHCGDLMFSGHTMILSLAFILAWDYSPFLHPWAVRVWVSVLLPISYYCILASRSHYTDDILVAMYVMIATYKVIDHAETGAPWQMQLLIRWMPWPGANTIEKWTADEVVVVVQTPAEDSTDASAALPEH</sequence>
<keyword id="KW-0418">Kinase</keyword>
<keyword id="KW-0443">Lipid metabolism</keyword>
<keyword id="KW-0472">Membrane</keyword>
<keyword id="KW-1185">Reference proteome</keyword>
<keyword id="KW-0746">Sphingolipid metabolism</keyword>
<keyword id="KW-0808">Transferase</keyword>
<keyword id="KW-0812">Transmembrane</keyword>
<keyword id="KW-1133">Transmembrane helix</keyword>
<name>SLS_LEIMA</name>
<proteinExistence type="inferred from homology"/>
<reference evidence="8" key="1">
    <citation type="journal article" date="2005" name="Science">
        <title>The genome of the kinetoplastid parasite, Leishmania major.</title>
        <authorList>
            <person name="Ivens A.C."/>
            <person name="Peacock C.S."/>
            <person name="Worthey E.A."/>
            <person name="Murphy L."/>
            <person name="Aggarwal G."/>
            <person name="Berriman M."/>
            <person name="Sisk E."/>
            <person name="Rajandream M.A."/>
            <person name="Adlem E."/>
            <person name="Aert R."/>
            <person name="Anupama A."/>
            <person name="Apostolou Z."/>
            <person name="Attipoe P."/>
            <person name="Bason N."/>
            <person name="Bauser C."/>
            <person name="Beck A."/>
            <person name="Beverley S.M."/>
            <person name="Bianchettin G."/>
            <person name="Borzym K."/>
            <person name="Bothe G."/>
            <person name="Bruschi C.V."/>
            <person name="Collins M."/>
            <person name="Cadag E."/>
            <person name="Ciarloni L."/>
            <person name="Clayton C."/>
            <person name="Coulson R.M.R."/>
            <person name="Cronin A."/>
            <person name="Cruz A.K."/>
            <person name="Davies R.M."/>
            <person name="De Gaudenzi J."/>
            <person name="Dobson D.E."/>
            <person name="Duesterhoeft A."/>
            <person name="Fazelina G."/>
            <person name="Fosker N."/>
            <person name="Frasch A.C."/>
            <person name="Fraser A."/>
            <person name="Fuchs M."/>
            <person name="Gabel C."/>
            <person name="Goble A."/>
            <person name="Goffeau A."/>
            <person name="Harris D."/>
            <person name="Hertz-Fowler C."/>
            <person name="Hilbert H."/>
            <person name="Horn D."/>
            <person name="Huang Y."/>
            <person name="Klages S."/>
            <person name="Knights A."/>
            <person name="Kube M."/>
            <person name="Larke N."/>
            <person name="Litvin L."/>
            <person name="Lord A."/>
            <person name="Louie T."/>
            <person name="Marra M."/>
            <person name="Masuy D."/>
            <person name="Matthews K."/>
            <person name="Michaeli S."/>
            <person name="Mottram J.C."/>
            <person name="Mueller-Auer S."/>
            <person name="Munden H."/>
            <person name="Nelson S."/>
            <person name="Norbertczak H."/>
            <person name="Oliver K."/>
            <person name="O'neil S."/>
            <person name="Pentony M."/>
            <person name="Pohl T.M."/>
            <person name="Price C."/>
            <person name="Purnelle B."/>
            <person name="Quail M.A."/>
            <person name="Rabbinowitsch E."/>
            <person name="Reinhardt R."/>
            <person name="Rieger M."/>
            <person name="Rinta J."/>
            <person name="Robben J."/>
            <person name="Robertson L."/>
            <person name="Ruiz J.C."/>
            <person name="Rutter S."/>
            <person name="Saunders D."/>
            <person name="Schaefer M."/>
            <person name="Schein J."/>
            <person name="Schwartz D.C."/>
            <person name="Seeger K."/>
            <person name="Seyler A."/>
            <person name="Sharp S."/>
            <person name="Shin H."/>
            <person name="Sivam D."/>
            <person name="Squares R."/>
            <person name="Squares S."/>
            <person name="Tosato V."/>
            <person name="Vogt C."/>
            <person name="Volckaert G."/>
            <person name="Wambutt R."/>
            <person name="Warren T."/>
            <person name="Wedler H."/>
            <person name="Woodward J."/>
            <person name="Zhou S."/>
            <person name="Zimmermann W."/>
            <person name="Smith D.F."/>
            <person name="Blackwell J.M."/>
            <person name="Stuart K.D."/>
            <person name="Barrell B.G."/>
            <person name="Myler P.J."/>
        </authorList>
    </citation>
    <scope>NUCLEOTIDE SEQUENCE [LARGE SCALE GENOMIC DNA]</scope>
    <source>
        <strain>MHOM/IL/81/Friedlin</strain>
    </source>
</reference>
<reference evidence="7" key="2">
    <citation type="journal article" date="2010" name="J. Biol. Chem.">
        <title>Cell-free synthesis and functional characterization of sphingolipid synthases from parasitic trypanosomatid protozoa.</title>
        <authorList>
            <person name="Sevova E.S."/>
            <person name="Goren M.A."/>
            <person name="Schwartz K.J."/>
            <person name="Hsu F.F."/>
            <person name="Turk J."/>
            <person name="Fox B.G."/>
            <person name="Bangs J.D."/>
        </authorList>
    </citation>
    <scope>NUCLEOTIDE SEQUENCE [GENOMIC DNA]</scope>
    <scope>FUNCTION</scope>
    <source>
        <strain evidence="4">MRHO/SU/59/P / LV39</strain>
    </source>
</reference>
<reference evidence="7" key="3">
    <citation type="journal article" date="2008" name="Mol. Microbiol.">
        <title>Developmentally regulated sphingolipid synthesis in African trypanosomes.</title>
        <authorList>
            <person name="Sutterwala S.S."/>
            <person name="Hsu F.F."/>
            <person name="Sevova E.S."/>
            <person name="Schwartz K.J."/>
            <person name="Zhang K."/>
            <person name="Key P."/>
            <person name="Turk J."/>
            <person name="Beverley S.M."/>
            <person name="Bangs J.D."/>
        </authorList>
    </citation>
    <scope>FUNCTION</scope>
</reference>
<feature type="chain" id="PRO_0000413860" description="Phosphatidylinositol:ceramide inositolphosphotransferase">
    <location>
        <begin position="1"/>
        <end position="338"/>
    </location>
</feature>
<feature type="topological domain" description="Cytoplasmic" evidence="2">
    <location>
        <begin position="1"/>
        <end position="36"/>
    </location>
</feature>
<feature type="transmembrane region" description="Helical" evidence="2">
    <location>
        <begin position="37"/>
        <end position="57"/>
    </location>
</feature>
<feature type="topological domain" description="Extracellular" evidence="2">
    <location>
        <begin position="58"/>
        <end position="87"/>
    </location>
</feature>
<feature type="transmembrane region" description="Helical" evidence="2">
    <location>
        <begin position="88"/>
        <end position="108"/>
    </location>
</feature>
<feature type="topological domain" description="Cytoplasmic" evidence="2">
    <location>
        <begin position="109"/>
        <end position="116"/>
    </location>
</feature>
<feature type="transmembrane region" description="Helical" evidence="2">
    <location>
        <begin position="117"/>
        <end position="137"/>
    </location>
</feature>
<feature type="topological domain" description="Extracellular" evidence="2">
    <location>
        <begin position="138"/>
        <end position="152"/>
    </location>
</feature>
<feature type="transmembrane region" description="Helical" evidence="2">
    <location>
        <begin position="153"/>
        <end position="173"/>
    </location>
</feature>
<feature type="topological domain" description="Cytoplasmic" evidence="2">
    <location>
        <begin position="174"/>
        <end position="189"/>
    </location>
</feature>
<feature type="transmembrane region" description="Helical" evidence="2">
    <location>
        <begin position="190"/>
        <end position="210"/>
    </location>
</feature>
<feature type="topological domain" description="Extracellular" evidence="2">
    <location>
        <begin position="211"/>
        <end position="222"/>
    </location>
</feature>
<feature type="transmembrane region" description="Helical" evidence="2">
    <location>
        <begin position="223"/>
        <end position="243"/>
    </location>
</feature>
<feature type="topological domain" description="Cytoplasmic" evidence="2">
    <location>
        <begin position="244"/>
        <end position="338"/>
    </location>
</feature>
<feature type="active site" evidence="1">
    <location>
        <position position="220"/>
    </location>
</feature>
<feature type="active site" evidence="1">
    <location>
        <position position="264"/>
    </location>
</feature>
<feature type="active site" evidence="1">
    <location>
        <position position="268"/>
    </location>
</feature>
<feature type="sequence conflict" description="In Ref. 2; no nucleotide entry." evidence="7" ref="2">
    <original>M</original>
    <variation>T</variation>
    <location>
        <position position="35"/>
    </location>
</feature>
<feature type="sequence conflict" description="In Ref. 2; no nucleotide entry." evidence="7" ref="2">
    <original>R</original>
    <variation>S</variation>
    <location>
        <position position="116"/>
    </location>
</feature>
<dbReference type="EC" id="2.7.8.-" evidence="4"/>
<dbReference type="EMBL" id="FR796431">
    <property type="protein sequence ID" value="CBZ13127.1"/>
    <property type="molecule type" value="Genomic_DNA"/>
</dbReference>
<dbReference type="RefSeq" id="XP_003722892.1">
    <property type="nucleotide sequence ID" value="XM_003722844.1"/>
</dbReference>
<dbReference type="STRING" id="5664.E9AFX2"/>
<dbReference type="EnsemblProtists" id="CBZ13127">
    <property type="protein sequence ID" value="CBZ13127"/>
    <property type="gene ID" value="LMJF_35_4990"/>
</dbReference>
<dbReference type="GeneID" id="12980649"/>
<dbReference type="KEGG" id="lma:LMJF_35_4990"/>
<dbReference type="VEuPathDB" id="TriTrypDB:LmjF.35.4990"/>
<dbReference type="VEuPathDB" id="TriTrypDB:LMJFC_350063500"/>
<dbReference type="VEuPathDB" id="TriTrypDB:LMJLV39_350057900"/>
<dbReference type="VEuPathDB" id="TriTrypDB:LMJSD75_350057200"/>
<dbReference type="eggNOG" id="KOG3058">
    <property type="taxonomic scope" value="Eukaryota"/>
</dbReference>
<dbReference type="HOGENOM" id="CLU_864647_0_0_1"/>
<dbReference type="InParanoid" id="E9AFX2"/>
<dbReference type="OMA" id="SGAIHCG"/>
<dbReference type="BRENDA" id="2.7.1.227">
    <property type="organism ID" value="2950"/>
</dbReference>
<dbReference type="Proteomes" id="UP000000542">
    <property type="component" value="Chromosome 35"/>
</dbReference>
<dbReference type="GO" id="GO:0020016">
    <property type="term" value="C:ciliary pocket"/>
    <property type="evidence" value="ECO:0000266"/>
    <property type="project" value="GeneDB"/>
</dbReference>
<dbReference type="GO" id="GO:0005789">
    <property type="term" value="C:endoplasmic reticulum membrane"/>
    <property type="evidence" value="ECO:0000318"/>
    <property type="project" value="GO_Central"/>
</dbReference>
<dbReference type="GO" id="GO:0005768">
    <property type="term" value="C:endosome"/>
    <property type="evidence" value="ECO:0000266"/>
    <property type="project" value="GeneDB"/>
</dbReference>
<dbReference type="GO" id="GO:0005794">
    <property type="term" value="C:Golgi apparatus"/>
    <property type="evidence" value="ECO:0000269"/>
    <property type="project" value="GeneDB"/>
</dbReference>
<dbReference type="GO" id="GO:0000139">
    <property type="term" value="C:Golgi membrane"/>
    <property type="evidence" value="ECO:0000318"/>
    <property type="project" value="GO_Central"/>
</dbReference>
<dbReference type="GO" id="GO:0005886">
    <property type="term" value="C:plasma membrane"/>
    <property type="evidence" value="ECO:0000318"/>
    <property type="project" value="GO_Central"/>
</dbReference>
<dbReference type="GO" id="GO:0047493">
    <property type="term" value="F:ceramide cholinephosphotransferase activity"/>
    <property type="evidence" value="ECO:0000318"/>
    <property type="project" value="GO_Central"/>
</dbReference>
<dbReference type="GO" id="GO:0016301">
    <property type="term" value="F:kinase activity"/>
    <property type="evidence" value="ECO:0007669"/>
    <property type="project" value="UniProtKB-KW"/>
</dbReference>
<dbReference type="GO" id="GO:0033188">
    <property type="term" value="F:sphingomyelin synthase activity"/>
    <property type="evidence" value="ECO:0000266"/>
    <property type="project" value="GeneDB"/>
</dbReference>
<dbReference type="GO" id="GO:0046513">
    <property type="term" value="P:ceramide biosynthetic process"/>
    <property type="evidence" value="ECO:0000318"/>
    <property type="project" value="GO_Central"/>
</dbReference>
<dbReference type="GO" id="GO:0046335">
    <property type="term" value="P:ethanolamine biosynthetic process"/>
    <property type="evidence" value="ECO:0000266"/>
    <property type="project" value="GeneDB"/>
</dbReference>
<dbReference type="InterPro" id="IPR045221">
    <property type="entry name" value="Sphingomyelin_synth-like"/>
</dbReference>
<dbReference type="InterPro" id="IPR025749">
    <property type="entry name" value="Sphingomyelin_synth-like_dom"/>
</dbReference>
<dbReference type="PANTHER" id="PTHR21290:SF25">
    <property type="entry name" value="SPHINGOMYELIN SYNTHASE-RELATED PROTEIN 1"/>
    <property type="match status" value="1"/>
</dbReference>
<dbReference type="PANTHER" id="PTHR21290">
    <property type="entry name" value="SPHINGOMYELIN SYNTHETASE"/>
    <property type="match status" value="1"/>
</dbReference>
<dbReference type="Pfam" id="PF14360">
    <property type="entry name" value="PAP2_C"/>
    <property type="match status" value="1"/>
</dbReference>
<gene>
    <name evidence="5 6" type="primary">IPCS</name>
    <name type="ORF">LMJF_35_4990</name>
</gene>
<accession>E9AFX2</accession>
<comment type="function">
    <text evidence="3 4">Bidirectional lipid inositolphosphotransferase capable of converting phosphatidylinositol (PI) and ceramide to inositol-phosphorylceramide (IPC) and diacylglycerol (DAG) and vice versa. Direction is dependent on the relative concentrations of DAG and ceramide as phosphoinositol acceptors. Essential for viability of the pathogenic bloodstream stage of this human protozoan parasite and, consequently, can be considered as potential drug target.</text>
</comment>
<comment type="subcellular location">
    <subcellularLocation>
        <location evidence="2">Membrane</location>
        <topology evidence="2">Multi-pass membrane protein</topology>
    </subcellularLocation>
</comment>
<comment type="similarity">
    <text evidence="2">Belongs to the sphingomyelin synthase family.</text>
</comment>